<proteinExistence type="inferred from homology"/>
<keyword id="KW-0150">Chloroplast</keyword>
<keyword id="KW-0472">Membrane</keyword>
<keyword id="KW-0520">NAD</keyword>
<keyword id="KW-0521">NADP</keyword>
<keyword id="KW-0934">Plastid</keyword>
<keyword id="KW-0618">Plastoquinone</keyword>
<keyword id="KW-0874">Quinone</keyword>
<keyword id="KW-0793">Thylakoid</keyword>
<keyword id="KW-1278">Translocase</keyword>
<keyword id="KW-0812">Transmembrane</keyword>
<keyword id="KW-1133">Transmembrane helix</keyword>
<geneLocation type="chloroplast"/>
<dbReference type="EC" id="7.1.1.-" evidence="1"/>
<dbReference type="EMBL" id="EU262889">
    <property type="protein sequence ID" value="ABW98921.1"/>
    <property type="molecule type" value="Genomic_DNA"/>
</dbReference>
<dbReference type="RefSeq" id="YP_001687416.1">
    <property type="nucleotide sequence ID" value="NC_010361.1"/>
</dbReference>
<dbReference type="SMR" id="B0Z509"/>
<dbReference type="GeneID" id="5952055"/>
<dbReference type="GO" id="GO:0009535">
    <property type="term" value="C:chloroplast thylakoid membrane"/>
    <property type="evidence" value="ECO:0007669"/>
    <property type="project" value="UniProtKB-SubCell"/>
</dbReference>
<dbReference type="GO" id="GO:0008137">
    <property type="term" value="F:NADH dehydrogenase (ubiquinone) activity"/>
    <property type="evidence" value="ECO:0007669"/>
    <property type="project" value="InterPro"/>
</dbReference>
<dbReference type="GO" id="GO:0048039">
    <property type="term" value="F:ubiquinone binding"/>
    <property type="evidence" value="ECO:0007669"/>
    <property type="project" value="TreeGrafter"/>
</dbReference>
<dbReference type="GO" id="GO:0042773">
    <property type="term" value="P:ATP synthesis coupled electron transport"/>
    <property type="evidence" value="ECO:0007669"/>
    <property type="project" value="InterPro"/>
</dbReference>
<dbReference type="GO" id="GO:0015990">
    <property type="term" value="P:electron transport coupled proton transport"/>
    <property type="evidence" value="ECO:0007669"/>
    <property type="project" value="TreeGrafter"/>
</dbReference>
<dbReference type="HAMAP" id="MF_00491">
    <property type="entry name" value="NDH1_NuoM"/>
    <property type="match status" value="1"/>
</dbReference>
<dbReference type="InterPro" id="IPR022997">
    <property type="entry name" value="NADH_Q_OxRdtase_chain4"/>
</dbReference>
<dbReference type="InterPro" id="IPR010227">
    <property type="entry name" value="NADH_Q_OxRdtase_chainM/4"/>
</dbReference>
<dbReference type="InterPro" id="IPR003918">
    <property type="entry name" value="NADH_UbQ_OxRdtase"/>
</dbReference>
<dbReference type="InterPro" id="IPR001750">
    <property type="entry name" value="ND/Mrp_TM"/>
</dbReference>
<dbReference type="NCBIfam" id="TIGR01972">
    <property type="entry name" value="NDH_I_M"/>
    <property type="match status" value="1"/>
</dbReference>
<dbReference type="PANTHER" id="PTHR43507:SF21">
    <property type="entry name" value="NAD(P)H-QUINONE OXIDOREDUCTASE CHAIN 4, CHLOROPLASTIC"/>
    <property type="match status" value="1"/>
</dbReference>
<dbReference type="PANTHER" id="PTHR43507">
    <property type="entry name" value="NADH-UBIQUINONE OXIDOREDUCTASE CHAIN 4"/>
    <property type="match status" value="1"/>
</dbReference>
<dbReference type="Pfam" id="PF00361">
    <property type="entry name" value="Proton_antipo_M"/>
    <property type="match status" value="1"/>
</dbReference>
<dbReference type="PRINTS" id="PR01437">
    <property type="entry name" value="NUOXDRDTASE4"/>
</dbReference>
<reference key="1">
    <citation type="journal article" date="2008" name="Nucleic Acids Res.">
        <title>The complete nucleotide sequences of the five genetically distinct plastid genomes of Oenothera, subsection Oenothera: I. Sequence evaluation and plastome evolution.</title>
        <authorList>
            <person name="Greiner S."/>
            <person name="Wang X."/>
            <person name="Rauwolf U."/>
            <person name="Silber M.V."/>
            <person name="Mayer K."/>
            <person name="Meurer J."/>
            <person name="Haberer G."/>
            <person name="Herrmann R.G."/>
        </authorList>
    </citation>
    <scope>NUCLEOTIDE SEQUENCE [LARGE SCALE GENOMIC DNA]</scope>
    <source>
        <strain>cv. Suaveolens Grado</strain>
    </source>
</reference>
<gene>
    <name evidence="1" type="primary">ndhD</name>
</gene>
<accession>B0Z509</accession>
<sequence length="500" mass="56033">MNSFPWLTIIVVFPILTGSLIFLLPHRGNKVMKWYTLCICILELLLTTYTFCYHFQLDDPLTQLTENYKWIHFFDFYWRLGIDGLSIGPILLTGFITTLATLAAWPVTRDAQLFHFLMLAMYSGQIGSFSSRDLLLFFLMWEFELIPVYLLLSMWGGKKRLYSATKFILYTAGGSIFLLIGVLGIGLYGSNEPTLNFETLANQSYPVALEVIFYVGFLIAFAVKLPIIPFHTWLPDTHGEAHYSTCMLLAGILLKMGAYGLVRINMELLPHAHCLFSPGLIIVGAIQIIYAASTSPGQLNLKKRIAYSSISHMGFIIIGIGSLSDTGLNGAILQIISHGFIGAALFFLAGTSYDRIRLLYLDEMGGMAIPLPKLFTMLSILSMASLALPGLSGFVAELLVFFGIITSQKYLLMPKILIAFLMAIGMILTPIYSLSMLRQMFYGYKLFNVPNYYFFDSGPRELFVSISLLLPIIGIGIYPDFVLSLSVEKVEAIISHFFFR</sequence>
<name>NU4C_OENBI</name>
<evidence type="ECO:0000255" key="1">
    <source>
        <dbReference type="HAMAP-Rule" id="MF_00491"/>
    </source>
</evidence>
<organism>
    <name type="scientific">Oenothera biennis</name>
    <name type="common">German evening primrose</name>
    <name type="synonym">Onagra biennis</name>
    <dbReference type="NCBI Taxonomy" id="3942"/>
    <lineage>
        <taxon>Eukaryota</taxon>
        <taxon>Viridiplantae</taxon>
        <taxon>Streptophyta</taxon>
        <taxon>Embryophyta</taxon>
        <taxon>Tracheophyta</taxon>
        <taxon>Spermatophyta</taxon>
        <taxon>Magnoliopsida</taxon>
        <taxon>eudicotyledons</taxon>
        <taxon>Gunneridae</taxon>
        <taxon>Pentapetalae</taxon>
        <taxon>rosids</taxon>
        <taxon>malvids</taxon>
        <taxon>Myrtales</taxon>
        <taxon>Onagraceae</taxon>
        <taxon>Onagroideae</taxon>
        <taxon>Onagreae</taxon>
        <taxon>Oenothera</taxon>
    </lineage>
</organism>
<feature type="chain" id="PRO_0000343297" description="NAD(P)H-quinone oxidoreductase chain 4, chloroplastic">
    <location>
        <begin position="1"/>
        <end position="500"/>
    </location>
</feature>
<feature type="transmembrane region" description="Helical" evidence="1">
    <location>
        <begin position="4"/>
        <end position="24"/>
    </location>
</feature>
<feature type="transmembrane region" description="Helical" evidence="1">
    <location>
        <begin position="37"/>
        <end position="57"/>
    </location>
</feature>
<feature type="transmembrane region" description="Helical" evidence="1">
    <location>
        <begin position="87"/>
        <end position="107"/>
    </location>
</feature>
<feature type="transmembrane region" description="Helical" evidence="1">
    <location>
        <begin position="111"/>
        <end position="131"/>
    </location>
</feature>
<feature type="transmembrane region" description="Helical" evidence="1">
    <location>
        <begin position="134"/>
        <end position="154"/>
    </location>
</feature>
<feature type="transmembrane region" description="Helical" evidence="1">
    <location>
        <begin position="167"/>
        <end position="187"/>
    </location>
</feature>
<feature type="transmembrane region" description="Helical" evidence="1">
    <location>
        <begin position="208"/>
        <end position="228"/>
    </location>
</feature>
<feature type="transmembrane region" description="Helical" evidence="1">
    <location>
        <begin position="242"/>
        <end position="262"/>
    </location>
</feature>
<feature type="transmembrane region" description="Helical" evidence="1">
    <location>
        <begin position="272"/>
        <end position="292"/>
    </location>
</feature>
<feature type="transmembrane region" description="Helical" evidence="1">
    <location>
        <begin position="305"/>
        <end position="325"/>
    </location>
</feature>
<feature type="transmembrane region" description="Helical" evidence="1">
    <location>
        <begin position="330"/>
        <end position="350"/>
    </location>
</feature>
<feature type="transmembrane region" description="Helical" evidence="1">
    <location>
        <begin position="386"/>
        <end position="406"/>
    </location>
</feature>
<feature type="transmembrane region" description="Helical" evidence="1">
    <location>
        <begin position="416"/>
        <end position="436"/>
    </location>
</feature>
<feature type="transmembrane region" description="Helical" evidence="1">
    <location>
        <begin position="462"/>
        <end position="482"/>
    </location>
</feature>
<protein>
    <recommendedName>
        <fullName evidence="1">NAD(P)H-quinone oxidoreductase chain 4, chloroplastic</fullName>
        <ecNumber evidence="1">7.1.1.-</ecNumber>
    </recommendedName>
    <alternativeName>
        <fullName evidence="1">NAD(P)H dehydrogenase, chain 4</fullName>
    </alternativeName>
    <alternativeName>
        <fullName evidence="1">NADH-plastoquinone oxidoreductase chain 4</fullName>
    </alternativeName>
</protein>
<comment type="catalytic activity">
    <reaction evidence="1">
        <text>a plastoquinone + NADH + (n+1) H(+)(in) = a plastoquinol + NAD(+) + n H(+)(out)</text>
        <dbReference type="Rhea" id="RHEA:42608"/>
        <dbReference type="Rhea" id="RHEA-COMP:9561"/>
        <dbReference type="Rhea" id="RHEA-COMP:9562"/>
        <dbReference type="ChEBI" id="CHEBI:15378"/>
        <dbReference type="ChEBI" id="CHEBI:17757"/>
        <dbReference type="ChEBI" id="CHEBI:57540"/>
        <dbReference type="ChEBI" id="CHEBI:57945"/>
        <dbReference type="ChEBI" id="CHEBI:62192"/>
    </reaction>
</comment>
<comment type="catalytic activity">
    <reaction evidence="1">
        <text>a plastoquinone + NADPH + (n+1) H(+)(in) = a plastoquinol + NADP(+) + n H(+)(out)</text>
        <dbReference type="Rhea" id="RHEA:42612"/>
        <dbReference type="Rhea" id="RHEA-COMP:9561"/>
        <dbReference type="Rhea" id="RHEA-COMP:9562"/>
        <dbReference type="ChEBI" id="CHEBI:15378"/>
        <dbReference type="ChEBI" id="CHEBI:17757"/>
        <dbReference type="ChEBI" id="CHEBI:57783"/>
        <dbReference type="ChEBI" id="CHEBI:58349"/>
        <dbReference type="ChEBI" id="CHEBI:62192"/>
    </reaction>
</comment>
<comment type="subcellular location">
    <subcellularLocation>
        <location evidence="1">Plastid</location>
        <location evidence="1">Chloroplast thylakoid membrane</location>
        <topology evidence="1">Multi-pass membrane protein</topology>
    </subcellularLocation>
</comment>
<comment type="similarity">
    <text evidence="1">Belongs to the complex I subunit 4 family.</text>
</comment>